<feature type="chain" id="PRO_0000105757" description="HTH-type transcriptional regulator TdcA">
    <location>
        <begin position="1"/>
        <end position="312"/>
    </location>
</feature>
<feature type="domain" description="HTH lysR-type" evidence="1">
    <location>
        <begin position="7"/>
        <end position="64"/>
    </location>
</feature>
<feature type="DNA-binding region" description="H-T-H motif" evidence="1">
    <location>
        <begin position="24"/>
        <end position="43"/>
    </location>
</feature>
<feature type="sequence conflict" description="In Ref. 1; AAA24659." evidence="3" ref="1">
    <original>T</original>
    <variation>A</variation>
    <location>
        <position position="3"/>
    </location>
</feature>
<reference key="1">
    <citation type="journal article" date="1985" name="Mol. Gen. Genet.">
        <title>Molecular cloning and expression of the biodegradative threonine dehydratase gene (tdc) of Escherichia coli K12.</title>
        <authorList>
            <person name="Goss T.J."/>
            <person name="Datta P."/>
        </authorList>
    </citation>
    <scope>NUCLEOTIDE SEQUENCE [GENOMIC DNA]</scope>
</reference>
<reference key="2">
    <citation type="journal article" date="1989" name="Nucleic Acids Res.">
        <title>The complete nucleotide sequence of the tdc region of Escherichia coli.</title>
        <authorList>
            <person name="Schweizer H."/>
            <person name="Datta P."/>
        </authorList>
    </citation>
    <scope>NUCLEOTIDE SEQUENCE [GENOMIC DNA]</scope>
</reference>
<reference key="3">
    <citation type="journal article" date="1997" name="Science">
        <title>The complete genome sequence of Escherichia coli K-12.</title>
        <authorList>
            <person name="Blattner F.R."/>
            <person name="Plunkett G. III"/>
            <person name="Bloch C.A."/>
            <person name="Perna N.T."/>
            <person name="Burland V."/>
            <person name="Riley M."/>
            <person name="Collado-Vides J."/>
            <person name="Glasner J.D."/>
            <person name="Rode C.K."/>
            <person name="Mayhew G.F."/>
            <person name="Gregor J."/>
            <person name="Davis N.W."/>
            <person name="Kirkpatrick H.A."/>
            <person name="Goeden M.A."/>
            <person name="Rose D.J."/>
            <person name="Mau B."/>
            <person name="Shao Y."/>
        </authorList>
    </citation>
    <scope>NUCLEOTIDE SEQUENCE [LARGE SCALE GENOMIC DNA]</scope>
    <source>
        <strain>K12 / MG1655 / ATCC 47076</strain>
    </source>
</reference>
<reference key="4">
    <citation type="journal article" date="2006" name="Mol. Syst. Biol.">
        <title>Highly accurate genome sequences of Escherichia coli K-12 strains MG1655 and W3110.</title>
        <authorList>
            <person name="Hayashi K."/>
            <person name="Morooka N."/>
            <person name="Yamamoto Y."/>
            <person name="Fujita K."/>
            <person name="Isono K."/>
            <person name="Choi S."/>
            <person name="Ohtsubo E."/>
            <person name="Baba T."/>
            <person name="Wanner B.L."/>
            <person name="Mori H."/>
            <person name="Horiuchi T."/>
        </authorList>
    </citation>
    <scope>NUCLEOTIDE SEQUENCE [LARGE SCALE GENOMIC DNA]</scope>
    <source>
        <strain>K12 / W3110 / ATCC 27325 / DSM 5911</strain>
    </source>
</reference>
<reference key="5">
    <citation type="journal article" date="1998" name="DNA Seq.">
        <title>The tdcE gene in Escherichia coli strain W3110 is separated from the rest of the tdc operon by insertion of IS5 elements.</title>
        <authorList>
            <person name="Hesslinger C."/>
            <person name="Sawers G."/>
        </authorList>
    </citation>
    <scope>NUCLEOTIDE SEQUENCE [GENOMIC DNA] OF 159-215</scope>
    <source>
        <strain>K12 / W3110 / ATCC 27325 / DSM 5911</strain>
    </source>
</reference>
<reference key="6">
    <citation type="journal article" date="1993" name="Mol. Gen. Genet.">
        <title>TdcA, a transcriptional activator of the tdcABC operon of Escherichia coli, is a member of the LysR family of proteins.</title>
        <authorList>
            <person name="Ganduri Y.L."/>
            <person name="Sadda S.R."/>
            <person name="Datta M.W."/>
            <person name="Jambukeswaran R.K."/>
            <person name="Datta P."/>
        </authorList>
    </citation>
    <scope>FUNCTION</scope>
</reference>
<name>TDCA_ECOLI</name>
<evidence type="ECO:0000255" key="1">
    <source>
        <dbReference type="PROSITE-ProRule" id="PRU00253"/>
    </source>
</evidence>
<evidence type="ECO:0000269" key="2">
    <source>
    </source>
</evidence>
<evidence type="ECO:0000305" key="3"/>
<protein>
    <recommendedName>
        <fullName>HTH-type transcriptional regulator TdcA</fullName>
    </recommendedName>
    <alternativeName>
        <fullName>Tdc operon transcriptional activator</fullName>
    </alternativeName>
</protein>
<dbReference type="EMBL" id="M21312">
    <property type="protein sequence ID" value="AAA24659.1"/>
    <property type="molecule type" value="Genomic_DNA"/>
</dbReference>
<dbReference type="EMBL" id="X14430">
    <property type="protein sequence ID" value="CAA32592.1"/>
    <property type="molecule type" value="Genomic_DNA"/>
</dbReference>
<dbReference type="EMBL" id="U18997">
    <property type="protein sequence ID" value="AAA57922.1"/>
    <property type="molecule type" value="Genomic_DNA"/>
</dbReference>
<dbReference type="EMBL" id="U00096">
    <property type="protein sequence ID" value="AAC76153.1"/>
    <property type="molecule type" value="Genomic_DNA"/>
</dbReference>
<dbReference type="EMBL" id="AP009048">
    <property type="protein sequence ID" value="BAE77167.1"/>
    <property type="molecule type" value="Genomic_DNA"/>
</dbReference>
<dbReference type="EMBL" id="AJ001620">
    <property type="protein sequence ID" value="CAA04873.1"/>
    <property type="molecule type" value="Genomic_DNA"/>
</dbReference>
<dbReference type="PIR" id="S46415">
    <property type="entry name" value="QQECRG"/>
</dbReference>
<dbReference type="RefSeq" id="NP_417588.1">
    <property type="nucleotide sequence ID" value="NC_000913.3"/>
</dbReference>
<dbReference type="RefSeq" id="WP_000104211.1">
    <property type="nucleotide sequence ID" value="NZ_STEB01000001.1"/>
</dbReference>
<dbReference type="SMR" id="P0ACQ7"/>
<dbReference type="BioGRID" id="4262420">
    <property type="interactions" value="206"/>
</dbReference>
<dbReference type="DIP" id="DIP-10968N"/>
<dbReference type="FunCoup" id="P0ACQ7">
    <property type="interactions" value="57"/>
</dbReference>
<dbReference type="IntAct" id="P0ACQ7">
    <property type="interactions" value="3"/>
</dbReference>
<dbReference type="STRING" id="511145.b3118"/>
<dbReference type="PaxDb" id="511145-b3118"/>
<dbReference type="EnsemblBacteria" id="AAC76153">
    <property type="protein sequence ID" value="AAC76153"/>
    <property type="gene ID" value="b3118"/>
</dbReference>
<dbReference type="GeneID" id="93778867"/>
<dbReference type="GeneID" id="947494"/>
<dbReference type="KEGG" id="ecj:JW3089"/>
<dbReference type="KEGG" id="eco:b3118"/>
<dbReference type="KEGG" id="ecoc:C3026_17005"/>
<dbReference type="PATRIC" id="fig|1411691.4.peg.3612"/>
<dbReference type="EchoBASE" id="EB0982"/>
<dbReference type="eggNOG" id="COG0583">
    <property type="taxonomic scope" value="Bacteria"/>
</dbReference>
<dbReference type="HOGENOM" id="CLU_039613_6_0_6"/>
<dbReference type="InParanoid" id="P0ACQ7"/>
<dbReference type="OMA" id="PQTDMGY"/>
<dbReference type="OrthoDB" id="6621862at2"/>
<dbReference type="PhylomeDB" id="P0ACQ7"/>
<dbReference type="BioCyc" id="EcoCyc:PD00268"/>
<dbReference type="UniPathway" id="UPA00052"/>
<dbReference type="PRO" id="PR:P0ACQ7"/>
<dbReference type="Proteomes" id="UP000000625">
    <property type="component" value="Chromosome"/>
</dbReference>
<dbReference type="GO" id="GO:0005737">
    <property type="term" value="C:cytoplasm"/>
    <property type="evidence" value="ECO:0000314"/>
    <property type="project" value="EcoCyc"/>
</dbReference>
<dbReference type="GO" id="GO:0005829">
    <property type="term" value="C:cytosol"/>
    <property type="evidence" value="ECO:0000318"/>
    <property type="project" value="GO_Central"/>
</dbReference>
<dbReference type="GO" id="GO:0000987">
    <property type="term" value="F:cis-regulatory region sequence-specific DNA binding"/>
    <property type="evidence" value="ECO:0000314"/>
    <property type="project" value="EcoCyc"/>
</dbReference>
<dbReference type="GO" id="GO:0003700">
    <property type="term" value="F:DNA-binding transcription factor activity"/>
    <property type="evidence" value="ECO:0007669"/>
    <property type="project" value="InterPro"/>
</dbReference>
<dbReference type="GO" id="GO:0043565">
    <property type="term" value="F:sequence-specific DNA binding"/>
    <property type="evidence" value="ECO:0000318"/>
    <property type="project" value="GO_Central"/>
</dbReference>
<dbReference type="GO" id="GO:0070689">
    <property type="term" value="P:L-threonine catabolic process to propionate"/>
    <property type="evidence" value="ECO:0007669"/>
    <property type="project" value="UniProtKB-UniPathway"/>
</dbReference>
<dbReference type="GO" id="GO:0045893">
    <property type="term" value="P:positive regulation of DNA-templated transcription"/>
    <property type="evidence" value="ECO:0000315"/>
    <property type="project" value="EcoCyc"/>
</dbReference>
<dbReference type="GO" id="GO:0006355">
    <property type="term" value="P:regulation of DNA-templated transcription"/>
    <property type="evidence" value="ECO:0000318"/>
    <property type="project" value="GO_Central"/>
</dbReference>
<dbReference type="CDD" id="cd08418">
    <property type="entry name" value="PBP2_TdcA"/>
    <property type="match status" value="1"/>
</dbReference>
<dbReference type="FunFam" id="1.10.10.10:FF:000230">
    <property type="entry name" value="HTH-type transcriptional regulator tdcA"/>
    <property type="match status" value="1"/>
</dbReference>
<dbReference type="FunFam" id="3.40.190.290:FF:000006">
    <property type="entry name" value="HTH-type transcriptional regulator tdcA"/>
    <property type="match status" value="1"/>
</dbReference>
<dbReference type="Gene3D" id="3.40.190.290">
    <property type="match status" value="1"/>
</dbReference>
<dbReference type="Gene3D" id="1.10.10.10">
    <property type="entry name" value="Winged helix-like DNA-binding domain superfamily/Winged helix DNA-binding domain"/>
    <property type="match status" value="1"/>
</dbReference>
<dbReference type="InterPro" id="IPR050950">
    <property type="entry name" value="HTH-type_LysR_regulators"/>
</dbReference>
<dbReference type="InterPro" id="IPR005119">
    <property type="entry name" value="LysR_subst-bd"/>
</dbReference>
<dbReference type="InterPro" id="IPR047993">
    <property type="entry name" value="TdcA/AbgR_PBP2"/>
</dbReference>
<dbReference type="InterPro" id="IPR000847">
    <property type="entry name" value="Tscrpt_reg_HTH_LysR"/>
</dbReference>
<dbReference type="InterPro" id="IPR036388">
    <property type="entry name" value="WH-like_DNA-bd_sf"/>
</dbReference>
<dbReference type="InterPro" id="IPR036390">
    <property type="entry name" value="WH_DNA-bd_sf"/>
</dbReference>
<dbReference type="NCBIfam" id="NF007667">
    <property type="entry name" value="PRK10341.1"/>
    <property type="match status" value="1"/>
</dbReference>
<dbReference type="PANTHER" id="PTHR30419:SF7">
    <property type="entry name" value="HTH-TYPE TRANSCRIPTIONAL REGULATOR TDCA"/>
    <property type="match status" value="1"/>
</dbReference>
<dbReference type="PANTHER" id="PTHR30419">
    <property type="entry name" value="HTH-TYPE TRANSCRIPTIONAL REGULATOR YBHD"/>
    <property type="match status" value="1"/>
</dbReference>
<dbReference type="Pfam" id="PF00126">
    <property type="entry name" value="HTH_1"/>
    <property type="match status" value="1"/>
</dbReference>
<dbReference type="Pfam" id="PF03466">
    <property type="entry name" value="LysR_substrate"/>
    <property type="match status" value="1"/>
</dbReference>
<dbReference type="PRINTS" id="PR00039">
    <property type="entry name" value="HTHLYSR"/>
</dbReference>
<dbReference type="SUPFAM" id="SSF53850">
    <property type="entry name" value="Periplasmic binding protein-like II"/>
    <property type="match status" value="1"/>
</dbReference>
<dbReference type="SUPFAM" id="SSF46785">
    <property type="entry name" value="Winged helix' DNA-binding domain"/>
    <property type="match status" value="1"/>
</dbReference>
<dbReference type="PROSITE" id="PS50931">
    <property type="entry name" value="HTH_LYSR"/>
    <property type="match status" value="1"/>
</dbReference>
<proteinExistence type="inferred from homology"/>
<comment type="function">
    <text evidence="2">Transcriptional activator for the tdcABCDE operon.</text>
</comment>
<comment type="pathway">
    <text>Amino-acid degradation; L-threonine degradation via propanoate pathway [regulation].</text>
</comment>
<comment type="similarity">
    <text evidence="3">Belongs to the LysR transcriptional regulatory family.</text>
</comment>
<gene>
    <name type="primary">tdcA</name>
    <name type="ordered locus">b3118</name>
    <name type="ordered locus">JW3089</name>
</gene>
<organism>
    <name type="scientific">Escherichia coli (strain K12)</name>
    <dbReference type="NCBI Taxonomy" id="83333"/>
    <lineage>
        <taxon>Bacteria</taxon>
        <taxon>Pseudomonadati</taxon>
        <taxon>Pseudomonadota</taxon>
        <taxon>Gammaproteobacteria</taxon>
        <taxon>Enterobacterales</taxon>
        <taxon>Enterobacteriaceae</taxon>
        <taxon>Escherichia</taxon>
    </lineage>
</organism>
<keyword id="KW-0010">Activator</keyword>
<keyword id="KW-0238">DNA-binding</keyword>
<keyword id="KW-1185">Reference proteome</keyword>
<keyword id="KW-0804">Transcription</keyword>
<keyword id="KW-0805">Transcription regulation</keyword>
<sequence length="312" mass="34539">MSTILLPKTQHLVVFQEVIRSGSIGSAAKELGLTQPAVSKIINDIEDYFGVELVVRKNTGVTLTPAGQLLLSRSESITREMKNMVNEISGMSSEAVVEVSFGFPSLIGFTFMSGMINKFKEVFPKAQVSMYEAQLSSFLPAIRDGRLDFAIGTLSAEMKLQDLHVEPLFESEFVLVASKSRTCTGTTTLESLKNEQWVLPQTNMGYYSELLTTLQRNGISIENIVKTDSVVTIYNLVLNADFLTVIPCDMTSPFGSNQFITIPVEETLPVAQYAAVWSKNYRIKKAASVLVELAKEYSSYNGCRRRQLIEVG</sequence>
<accession>P0ACQ7</accession>
<accession>P11036</accession>
<accession>Q2M989</accession>